<reference key="1">
    <citation type="journal article" date="2003" name="DNA Res.">
        <title>Prediction of the coding sequences of mouse homologues of KIAA gene: III. The complete nucleotide sequences of 500 mouse KIAA-homologous cDNAs identified by screening of terminal sequences of cDNA clones randomly sampled from size-fractionated libraries.</title>
        <authorList>
            <person name="Okazaki N."/>
            <person name="Kikuno R."/>
            <person name="Ohara R."/>
            <person name="Inamoto S."/>
            <person name="Koseki H."/>
            <person name="Hiraoka S."/>
            <person name="Saga Y."/>
            <person name="Nagase T."/>
            <person name="Ohara O."/>
            <person name="Koga H."/>
        </authorList>
    </citation>
    <scope>NUCLEOTIDE SEQUENCE [LARGE SCALE MRNA] (ISOFORM 1)</scope>
    <source>
        <tissue>Brain</tissue>
    </source>
</reference>
<reference key="2">
    <citation type="journal article" date="2009" name="PLoS Biol.">
        <title>Lineage-specific biology revealed by a finished genome assembly of the mouse.</title>
        <authorList>
            <person name="Church D.M."/>
            <person name="Goodstadt L."/>
            <person name="Hillier L.W."/>
            <person name="Zody M.C."/>
            <person name="Goldstein S."/>
            <person name="She X."/>
            <person name="Bult C.J."/>
            <person name="Agarwala R."/>
            <person name="Cherry J.L."/>
            <person name="DiCuccio M."/>
            <person name="Hlavina W."/>
            <person name="Kapustin Y."/>
            <person name="Meric P."/>
            <person name="Maglott D."/>
            <person name="Birtle Z."/>
            <person name="Marques A.C."/>
            <person name="Graves T."/>
            <person name="Zhou S."/>
            <person name="Teague B."/>
            <person name="Potamousis K."/>
            <person name="Churas C."/>
            <person name="Place M."/>
            <person name="Herschleb J."/>
            <person name="Runnheim R."/>
            <person name="Forrest D."/>
            <person name="Amos-Landgraf J."/>
            <person name="Schwartz D.C."/>
            <person name="Cheng Z."/>
            <person name="Lindblad-Toh K."/>
            <person name="Eichler E.E."/>
            <person name="Ponting C.P."/>
        </authorList>
    </citation>
    <scope>NUCLEOTIDE SEQUENCE [LARGE SCALE GENOMIC DNA]</scope>
    <source>
        <strain>C57BL/6J</strain>
    </source>
</reference>
<reference key="3">
    <citation type="journal article" date="2004" name="Genome Res.">
        <title>The status, quality, and expansion of the NIH full-length cDNA project: the Mammalian Gene Collection (MGC).</title>
        <authorList>
            <consortium name="The MGC Project Team"/>
        </authorList>
    </citation>
    <scope>NUCLEOTIDE SEQUENCE [LARGE SCALE MRNA] (ISOFORMS 1 AND 2)</scope>
    <source>
        <strain>C57BL/6J</strain>
        <strain>FVB/N</strain>
        <tissue>Brain</tissue>
        <tissue>Mammary tumor</tissue>
    </source>
</reference>
<reference key="4">
    <citation type="journal article" date="2005" name="Science">
        <title>The transcriptional landscape of the mammalian genome.</title>
        <authorList>
            <person name="Carninci P."/>
            <person name="Kasukawa T."/>
            <person name="Katayama S."/>
            <person name="Gough J."/>
            <person name="Frith M.C."/>
            <person name="Maeda N."/>
            <person name="Oyama R."/>
            <person name="Ravasi T."/>
            <person name="Lenhard B."/>
            <person name="Wells C."/>
            <person name="Kodzius R."/>
            <person name="Shimokawa K."/>
            <person name="Bajic V.B."/>
            <person name="Brenner S.E."/>
            <person name="Batalov S."/>
            <person name="Forrest A.R."/>
            <person name="Zavolan M."/>
            <person name="Davis M.J."/>
            <person name="Wilming L.G."/>
            <person name="Aidinis V."/>
            <person name="Allen J.E."/>
            <person name="Ambesi-Impiombato A."/>
            <person name="Apweiler R."/>
            <person name="Aturaliya R.N."/>
            <person name="Bailey T.L."/>
            <person name="Bansal M."/>
            <person name="Baxter L."/>
            <person name="Beisel K.W."/>
            <person name="Bersano T."/>
            <person name="Bono H."/>
            <person name="Chalk A.M."/>
            <person name="Chiu K.P."/>
            <person name="Choudhary V."/>
            <person name="Christoffels A."/>
            <person name="Clutterbuck D.R."/>
            <person name="Crowe M.L."/>
            <person name="Dalla E."/>
            <person name="Dalrymple B.P."/>
            <person name="de Bono B."/>
            <person name="Della Gatta G."/>
            <person name="di Bernardo D."/>
            <person name="Down T."/>
            <person name="Engstrom P."/>
            <person name="Fagiolini M."/>
            <person name="Faulkner G."/>
            <person name="Fletcher C.F."/>
            <person name="Fukushima T."/>
            <person name="Furuno M."/>
            <person name="Futaki S."/>
            <person name="Gariboldi M."/>
            <person name="Georgii-Hemming P."/>
            <person name="Gingeras T.R."/>
            <person name="Gojobori T."/>
            <person name="Green R.E."/>
            <person name="Gustincich S."/>
            <person name="Harbers M."/>
            <person name="Hayashi Y."/>
            <person name="Hensch T.K."/>
            <person name="Hirokawa N."/>
            <person name="Hill D."/>
            <person name="Huminiecki L."/>
            <person name="Iacono M."/>
            <person name="Ikeo K."/>
            <person name="Iwama A."/>
            <person name="Ishikawa T."/>
            <person name="Jakt M."/>
            <person name="Kanapin A."/>
            <person name="Katoh M."/>
            <person name="Kawasawa Y."/>
            <person name="Kelso J."/>
            <person name="Kitamura H."/>
            <person name="Kitano H."/>
            <person name="Kollias G."/>
            <person name="Krishnan S.P."/>
            <person name="Kruger A."/>
            <person name="Kummerfeld S.K."/>
            <person name="Kurochkin I.V."/>
            <person name="Lareau L.F."/>
            <person name="Lazarevic D."/>
            <person name="Lipovich L."/>
            <person name="Liu J."/>
            <person name="Liuni S."/>
            <person name="McWilliam S."/>
            <person name="Madan Babu M."/>
            <person name="Madera M."/>
            <person name="Marchionni L."/>
            <person name="Matsuda H."/>
            <person name="Matsuzawa S."/>
            <person name="Miki H."/>
            <person name="Mignone F."/>
            <person name="Miyake S."/>
            <person name="Morris K."/>
            <person name="Mottagui-Tabar S."/>
            <person name="Mulder N."/>
            <person name="Nakano N."/>
            <person name="Nakauchi H."/>
            <person name="Ng P."/>
            <person name="Nilsson R."/>
            <person name="Nishiguchi S."/>
            <person name="Nishikawa S."/>
            <person name="Nori F."/>
            <person name="Ohara O."/>
            <person name="Okazaki Y."/>
            <person name="Orlando V."/>
            <person name="Pang K.C."/>
            <person name="Pavan W.J."/>
            <person name="Pavesi G."/>
            <person name="Pesole G."/>
            <person name="Petrovsky N."/>
            <person name="Piazza S."/>
            <person name="Reed J."/>
            <person name="Reid J.F."/>
            <person name="Ring B.Z."/>
            <person name="Ringwald M."/>
            <person name="Rost B."/>
            <person name="Ruan Y."/>
            <person name="Salzberg S.L."/>
            <person name="Sandelin A."/>
            <person name="Schneider C."/>
            <person name="Schoenbach C."/>
            <person name="Sekiguchi K."/>
            <person name="Semple C.A."/>
            <person name="Seno S."/>
            <person name="Sessa L."/>
            <person name="Sheng Y."/>
            <person name="Shibata Y."/>
            <person name="Shimada H."/>
            <person name="Shimada K."/>
            <person name="Silva D."/>
            <person name="Sinclair B."/>
            <person name="Sperling S."/>
            <person name="Stupka E."/>
            <person name="Sugiura K."/>
            <person name="Sultana R."/>
            <person name="Takenaka Y."/>
            <person name="Taki K."/>
            <person name="Tammoja K."/>
            <person name="Tan S.L."/>
            <person name="Tang S."/>
            <person name="Taylor M.S."/>
            <person name="Tegner J."/>
            <person name="Teichmann S.A."/>
            <person name="Ueda H.R."/>
            <person name="van Nimwegen E."/>
            <person name="Verardo R."/>
            <person name="Wei C.L."/>
            <person name="Yagi K."/>
            <person name="Yamanishi H."/>
            <person name="Zabarovsky E."/>
            <person name="Zhu S."/>
            <person name="Zimmer A."/>
            <person name="Hide W."/>
            <person name="Bult C."/>
            <person name="Grimmond S.M."/>
            <person name="Teasdale R.D."/>
            <person name="Liu E.T."/>
            <person name="Brusic V."/>
            <person name="Quackenbush J."/>
            <person name="Wahlestedt C."/>
            <person name="Mattick J.S."/>
            <person name="Hume D.A."/>
            <person name="Kai C."/>
            <person name="Sasaki D."/>
            <person name="Tomaru Y."/>
            <person name="Fukuda S."/>
            <person name="Kanamori-Katayama M."/>
            <person name="Suzuki M."/>
            <person name="Aoki J."/>
            <person name="Arakawa T."/>
            <person name="Iida J."/>
            <person name="Imamura K."/>
            <person name="Itoh M."/>
            <person name="Kato T."/>
            <person name="Kawaji H."/>
            <person name="Kawagashira N."/>
            <person name="Kawashima T."/>
            <person name="Kojima M."/>
            <person name="Kondo S."/>
            <person name="Konno H."/>
            <person name="Nakano K."/>
            <person name="Ninomiya N."/>
            <person name="Nishio T."/>
            <person name="Okada M."/>
            <person name="Plessy C."/>
            <person name="Shibata K."/>
            <person name="Shiraki T."/>
            <person name="Suzuki S."/>
            <person name="Tagami M."/>
            <person name="Waki K."/>
            <person name="Watahiki A."/>
            <person name="Okamura-Oho Y."/>
            <person name="Suzuki H."/>
            <person name="Kawai J."/>
            <person name="Hayashizaki Y."/>
        </authorList>
    </citation>
    <scope>NUCLEOTIDE SEQUENCE [LARGE SCALE MRNA] OF 1521-1867</scope>
    <source>
        <strain>C57BL/6J</strain>
        <tissue>Embryo</tissue>
    </source>
</reference>
<reference key="5">
    <citation type="journal article" date="2006" name="Mol. Cell. Proteomics">
        <title>Comprehensive identification of phosphorylation sites in postsynaptic density preparations.</title>
        <authorList>
            <person name="Trinidad J.C."/>
            <person name="Specht C.G."/>
            <person name="Thalhammer A."/>
            <person name="Schoepfer R."/>
            <person name="Burlingame A.L."/>
        </authorList>
    </citation>
    <scope>IDENTIFICATION BY MASS SPECTROMETRY [LARGE SCALE ANALYSIS]</scope>
    <source>
        <tissue>Brain</tissue>
    </source>
</reference>
<reference key="6">
    <citation type="journal article" date="2007" name="Proc. Natl. Acad. Sci. U.S.A.">
        <title>Large-scale phosphorylation analysis of mouse liver.</title>
        <authorList>
            <person name="Villen J."/>
            <person name="Beausoleil S.A."/>
            <person name="Gerber S.A."/>
            <person name="Gygi S.P."/>
        </authorList>
    </citation>
    <scope>IDENTIFICATION BY MASS SPECTROMETRY [LARGE SCALE ANALYSIS]</scope>
    <source>
        <tissue>Liver</tissue>
    </source>
</reference>
<reference key="7">
    <citation type="journal article" date="2010" name="Cell">
        <title>A tissue-specific atlas of mouse protein phosphorylation and expression.</title>
        <authorList>
            <person name="Huttlin E.L."/>
            <person name="Jedrychowski M.P."/>
            <person name="Elias J.E."/>
            <person name="Goswami T."/>
            <person name="Rad R."/>
            <person name="Beausoleil S.A."/>
            <person name="Villen J."/>
            <person name="Haas W."/>
            <person name="Sowa M.E."/>
            <person name="Gygi S.P."/>
        </authorList>
    </citation>
    <scope>IDENTIFICATION BY MASS SPECTROMETRY [LARGE SCALE ANALYSIS]</scope>
    <source>
        <tissue>Brain</tissue>
        <tissue>Brown adipose tissue</tissue>
        <tissue>Heart</tissue>
        <tissue>Kidney</tissue>
        <tissue>Liver</tissue>
        <tissue>Lung</tissue>
        <tissue>Pancreas</tissue>
        <tissue>Spleen</tissue>
        <tissue>Testis</tissue>
    </source>
</reference>
<reference key="8">
    <citation type="journal article" date="2022" name="Hum. Mol. Genet.">
        <title>Distinct roles for the Charcot-Marie-Tooth disease-causing endosomal regulators Mtmr5 and Mtmr13 in axon radial sorting and Schwann cell myelination.</title>
        <authorList>
            <person name="Mammel A.E."/>
            <person name="Delgado K.C."/>
            <person name="Chin A.L."/>
            <person name="Condon A.F."/>
            <person name="Hill J.Q."/>
            <person name="Aicher S.A."/>
            <person name="Wang Y."/>
            <person name="Fedorov L.M."/>
            <person name="Robinson F.L."/>
        </authorList>
    </citation>
    <scope>FUNCTION</scope>
    <scope>INTERACTION WITH MTMR13</scope>
    <scope>TISSUE SPECIFICITY</scope>
    <scope>DEVELOPMENTAL STAGE</scope>
    <scope>DISRUPTION PHENOTYPE</scope>
</reference>
<reference key="9">
    <citation type="submission" date="2004-05" db="PDB data bank">
        <title>solution structure of the C-terminal pleckstrin homology domain of Sbf1 from mouse.</title>
        <authorList>
            <consortium name="RIKEN structural genomics initiative (RSGI)"/>
        </authorList>
    </citation>
    <scope>STRUCTURE BY NMR OF 1762-1865</scope>
</reference>
<protein>
    <recommendedName>
        <fullName>Myotubularin-related protein 5</fullName>
    </recommendedName>
    <alternativeName>
        <fullName evidence="9">Inactive phosphatidylinositol 3-phosphatase 5</fullName>
    </alternativeName>
    <alternativeName>
        <fullName>SET-binding factor 1</fullName>
        <shortName>Sbf1</shortName>
    </alternativeName>
</protein>
<organism>
    <name type="scientific">Mus musculus</name>
    <name type="common">Mouse</name>
    <dbReference type="NCBI Taxonomy" id="10090"/>
    <lineage>
        <taxon>Eukaryota</taxon>
        <taxon>Metazoa</taxon>
        <taxon>Chordata</taxon>
        <taxon>Craniata</taxon>
        <taxon>Vertebrata</taxon>
        <taxon>Euteleostomi</taxon>
        <taxon>Mammalia</taxon>
        <taxon>Eutheria</taxon>
        <taxon>Euarchontoglires</taxon>
        <taxon>Glires</taxon>
        <taxon>Rodentia</taxon>
        <taxon>Myomorpha</taxon>
        <taxon>Muroidea</taxon>
        <taxon>Muridae</taxon>
        <taxon>Murinae</taxon>
        <taxon>Mus</taxon>
        <taxon>Mus</taxon>
    </lineage>
</organism>
<name>MTMR5_MOUSE</name>
<comment type="function">
    <text evidence="1 7">Acts as an adapter for the phosphatase MTMR2 to regulate MTMR2 catalytic activity and subcellular location. Promotes the exchange of GDP to GTP, converting inactive GDP-bound Rab proteins into their active GTP-bound form. May function as a guanine nucleotide exchange factor (GEF) activating RAB28. Acts as a suppressor of autophagy in neurons (By similarity). Together with its binding partner, the phosphatase MTMR2, plays a role in dephosphorylation of phosphoinositides critical for autophagy initiation and autophagosome maturation (By similarity). Plays a role in positively regulating late-stage radial sorting of large caliber axons, a process leading to myelination by Schwann cells, possibly via regulating endosomal trafficking (PubMed:34718573). Inhibits myoblast differentiation in vitro and induces oncogenic transformation in fibroblasts (By similarity).</text>
</comment>
<comment type="subunit">
    <text evidence="1 7">Heterodimer with lipid phosphatase MTMR2. Interacts with SBF2/MTMR13; the interaction seems to be independent of the coiled-coil and PH domain of SBF2/MTMR13 and independent of MTMR2 (PubMed:34718573). Interacts with KMT2A/MLL1 (via SET domain). Interacts with SUV39H1.</text>
</comment>
<comment type="subcellular location">
    <subcellularLocation>
        <location evidence="1">Cytoplasm</location>
    </subcellularLocation>
    <subcellularLocation>
        <location evidence="1">Cytoplasm</location>
        <location evidence="1">Perinuclear region</location>
    </subcellularLocation>
    <subcellularLocation>
        <location evidence="1">Cell projection</location>
        <location evidence="1">Neuron projection</location>
    </subcellularLocation>
    <text evidence="1">Localized in neuronal somata and processes with punctate/vesicular morphology.</text>
</comment>
<comment type="alternative products">
    <event type="alternative splicing"/>
    <isoform>
        <id>Q6ZPE2-1</id>
        <name>1</name>
        <sequence type="displayed"/>
    </isoform>
    <isoform>
        <id>Q6ZPE2-2</id>
        <name>2</name>
        <sequence type="described" ref="VSP_047523"/>
    </isoform>
</comment>
<comment type="tissue specificity">
    <text evidence="7">Expressed in sciatic nerve and brain (at protein level) (PubMed:34718573). Expressed in Schwann cells (PubMed:34718573).</text>
</comment>
<comment type="developmental stage">
    <text evidence="7">Highest expression in sciatic nerves at P7. Levels are significantly reduced by P21, although the protein remains detectable in adult nerves.</text>
</comment>
<comment type="domain">
    <text evidence="1">The C-terminal domain mediates interaction with MTMR2.</text>
</comment>
<comment type="disruption phenotype">
    <text evidence="7">Viable. Approximately 30% smaller than wild-type control animals. Males are sterile (PubMed:34718573). Significant increase in the proportion of bundled axons with a diameter of &gt;1 um (PubMed:34718573). Significant increase in unmyelinated axons that are in 1:1 relationships with Schwann cells (PubMed:34718573). Significant decrease in the percentage of bundles containing between 11 and 20 axons (PubMed:34718573). Bundled nerve axons were incompletely enwrapped by Schwann cell processes, as evidenced by direct contact of axons with basal laminae (PubMed:34718573). Number of axons per bundle not markedly changed (PubMed:34718573). No impact on Mtmr2 protein levels in sciatic nerves. At 3 months, the morphology of sciatic nerves appears grossly normal. Does not cause CMT4B-like myelin outfoldings. Does not alter myelin thickness. Does not alter the diameter of myelinated axons (PubMed:34718573). Double knockout animals with Mtmr13 are non-viable, dying during late gestation or within a few hours of birth (PubMed:34718573).</text>
</comment>
<comment type="similarity">
    <text evidence="9">Belongs to the protein-tyrosine phosphatase family. Non-receptor class myotubularin subfamily.</text>
</comment>
<comment type="caution">
    <text evidence="1 9">Although it belongs to the non-receptor class myotubularin subfamily, lacks the conserved active site cysteine residue at position 1422 in the dsPTPase catalytic loop and does not have phosphatase activity (By similarity). The pocket is however sufficiently preserved to bind phosphorylated substrates, and maybe protect them from phosphatases.</text>
</comment>
<comment type="sequence caution" evidence="9">
    <conflict type="erroneous initiation">
        <sequence resource="EMBL-CDS" id="AAH29156"/>
    </conflict>
    <text>Truncated N-terminus.</text>
</comment>
<comment type="sequence caution" evidence="9">
    <conflict type="erroneous initiation">
        <sequence resource="EMBL-CDS" id="BAC98295"/>
    </conflict>
    <text>Extended N-terminus.</text>
</comment>
<proteinExistence type="evidence at protein level"/>
<feature type="chain" id="PRO_0000293476" description="Myotubularin-related protein 5">
    <location>
        <begin position="1"/>
        <end position="1867"/>
    </location>
</feature>
<feature type="domain" description="uDENN" evidence="4">
    <location>
        <begin position="7"/>
        <end position="184"/>
    </location>
</feature>
<feature type="domain" description="cDENN" evidence="4">
    <location>
        <begin position="203"/>
        <end position="336"/>
    </location>
</feature>
<feature type="domain" description="dDENN" evidence="4">
    <location>
        <begin position="338"/>
        <end position="439"/>
    </location>
</feature>
<feature type="domain" description="GRAM" evidence="2">
    <location>
        <begin position="880"/>
        <end position="968"/>
    </location>
</feature>
<feature type="domain" description="Myotubularin phosphatase" evidence="5">
    <location>
        <begin position="1120"/>
        <end position="1596"/>
    </location>
</feature>
<feature type="domain" description="PH" evidence="3">
    <location>
        <begin position="1761"/>
        <end position="1865"/>
    </location>
</feature>
<feature type="region of interest" description="Disordered" evidence="6">
    <location>
        <begin position="102"/>
        <end position="121"/>
    </location>
</feature>
<feature type="region of interest" description="Disordered" evidence="6">
    <location>
        <begin position="702"/>
        <end position="725"/>
    </location>
</feature>
<feature type="region of interest" description="Disordered" evidence="6">
    <location>
        <begin position="1065"/>
        <end position="1092"/>
    </location>
</feature>
<feature type="region of interest" description="Disordered" evidence="6">
    <location>
        <begin position="1260"/>
        <end position="1318"/>
    </location>
</feature>
<feature type="region of interest" description="Disordered" evidence="6">
    <location>
        <begin position="1605"/>
        <end position="1633"/>
    </location>
</feature>
<feature type="region of interest" description="Disordered" evidence="6">
    <location>
        <begin position="1723"/>
        <end position="1752"/>
    </location>
</feature>
<feature type="compositionally biased region" description="Polar residues" evidence="6">
    <location>
        <begin position="705"/>
        <end position="715"/>
    </location>
</feature>
<feature type="compositionally biased region" description="Polar residues" evidence="6">
    <location>
        <begin position="1260"/>
        <end position="1269"/>
    </location>
</feature>
<feature type="compositionally biased region" description="Polar residues" evidence="6">
    <location>
        <begin position="1281"/>
        <end position="1290"/>
    </location>
</feature>
<feature type="compositionally biased region" description="Low complexity" evidence="6">
    <location>
        <begin position="1723"/>
        <end position="1750"/>
    </location>
</feature>
<feature type="modified residue" description="Phosphoserine" evidence="1">
    <location>
        <position position="1120"/>
    </location>
</feature>
<feature type="modified residue" description="Phosphothreonine" evidence="1">
    <location>
        <position position="1137"/>
    </location>
</feature>
<feature type="modified residue" description="N6-methyllysine" evidence="1">
    <location>
        <position position="1222"/>
    </location>
</feature>
<feature type="modified residue" description="Phosphoserine" evidence="1">
    <location>
        <position position="1746"/>
    </location>
</feature>
<feature type="splice variant" id="VSP_047523" description="In isoform 2." evidence="8">
    <original>H</original>
    <variation>HVPSPRARVTTLSNPLAASASRWTASR</variation>
    <location>
        <position position="1275"/>
    </location>
</feature>
<feature type="sequence conflict" description="In Ref. 3; AAI72094." evidence="9" ref="3">
    <original>C</original>
    <variation>R</variation>
    <location>
        <position position="317"/>
    </location>
</feature>
<feature type="sequence conflict" description="In Ref. 3; AAI57936." evidence="9" ref="3">
    <original>E</original>
    <variation>D</variation>
    <location>
        <position position="1347"/>
    </location>
</feature>
<feature type="sequence conflict" description="In Ref. 4; BAC36139." evidence="9" ref="4">
    <original>R</original>
    <variation>W</variation>
    <location>
        <position position="1521"/>
    </location>
</feature>
<feature type="strand" evidence="10">
    <location>
        <begin position="1762"/>
        <end position="1770"/>
    </location>
</feature>
<feature type="strand" evidence="10">
    <location>
        <begin position="1774"/>
        <end position="1776"/>
    </location>
</feature>
<feature type="strand" evidence="10">
    <location>
        <begin position="1779"/>
        <end position="1786"/>
    </location>
</feature>
<feature type="turn" evidence="10">
    <location>
        <begin position="1787"/>
        <end position="1790"/>
    </location>
</feature>
<feature type="strand" evidence="10">
    <location>
        <begin position="1791"/>
        <end position="1799"/>
    </location>
</feature>
<feature type="strand" evidence="10">
    <location>
        <begin position="1806"/>
        <end position="1808"/>
    </location>
</feature>
<feature type="helix" evidence="10">
    <location>
        <begin position="1809"/>
        <end position="1811"/>
    </location>
</feature>
<feature type="strand" evidence="10">
    <location>
        <begin position="1812"/>
        <end position="1816"/>
    </location>
</feature>
<feature type="strand" evidence="10">
    <location>
        <begin position="1826"/>
        <end position="1828"/>
    </location>
</feature>
<feature type="turn" evidence="10">
    <location>
        <begin position="1830"/>
        <end position="1832"/>
    </location>
</feature>
<feature type="strand" evidence="10">
    <location>
        <begin position="1834"/>
        <end position="1840"/>
    </location>
</feature>
<feature type="strand" evidence="10">
    <location>
        <begin position="1842"/>
        <end position="1846"/>
    </location>
</feature>
<feature type="helix" evidence="10">
    <location>
        <begin position="1850"/>
        <end position="1861"/>
    </location>
</feature>
<keyword id="KW-0002">3D-structure</keyword>
<keyword id="KW-0025">Alternative splicing</keyword>
<keyword id="KW-0966">Cell projection</keyword>
<keyword id="KW-0963">Cytoplasm</keyword>
<keyword id="KW-0344">Guanine-nucleotide releasing factor</keyword>
<keyword id="KW-0488">Methylation</keyword>
<keyword id="KW-0597">Phosphoprotein</keyword>
<keyword id="KW-1185">Reference proteome</keyword>
<accession>Q6ZPE2</accession>
<accession>B2RXQ1</accession>
<accession>B2RXX4</accession>
<accession>B7ZWK2</accession>
<accession>Q4QQM2</accession>
<accession>Q8BK68</accession>
<accession>Q8K2Z0</accession>
<gene>
    <name type="primary">Sbf1</name>
    <name type="synonym">Kiaa3020</name>
    <name type="synonym">Mtmr5</name>
</gene>
<dbReference type="EMBL" id="AK129485">
    <property type="protein sequence ID" value="BAC98295.1"/>
    <property type="status" value="ALT_INIT"/>
    <property type="molecule type" value="mRNA"/>
</dbReference>
<dbReference type="EMBL" id="AC160538">
    <property type="status" value="NOT_ANNOTATED_CDS"/>
    <property type="molecule type" value="Genomic_DNA"/>
</dbReference>
<dbReference type="EMBL" id="BC029156">
    <property type="protein sequence ID" value="AAH29156.1"/>
    <property type="status" value="ALT_INIT"/>
    <property type="molecule type" value="mRNA"/>
</dbReference>
<dbReference type="EMBL" id="BC098209">
    <property type="protein sequence ID" value="AAH98209.1"/>
    <property type="molecule type" value="mRNA"/>
</dbReference>
<dbReference type="EMBL" id="BC157935">
    <property type="protein sequence ID" value="AAI57936.1"/>
    <property type="molecule type" value="mRNA"/>
</dbReference>
<dbReference type="EMBL" id="BC158013">
    <property type="protein sequence ID" value="AAI58014.1"/>
    <property type="molecule type" value="mRNA"/>
</dbReference>
<dbReference type="EMBL" id="BC172094">
    <property type="protein sequence ID" value="AAI72094.1"/>
    <property type="molecule type" value="mRNA"/>
</dbReference>
<dbReference type="EMBL" id="AK076039">
    <property type="protein sequence ID" value="BAC36139.1"/>
    <property type="molecule type" value="mRNA"/>
</dbReference>
<dbReference type="CCDS" id="CCDS37175.2">
    <molecule id="Q6ZPE2-1"/>
</dbReference>
<dbReference type="CCDS" id="CCDS49699.1">
    <molecule id="Q6ZPE2-2"/>
</dbReference>
<dbReference type="RefSeq" id="NP_001074499.2">
    <molecule id="Q6ZPE2-1"/>
    <property type="nucleotide sequence ID" value="NM_001081030.2"/>
</dbReference>
<dbReference type="RefSeq" id="NP_001164032.1">
    <molecule id="Q6ZPE2-2"/>
    <property type="nucleotide sequence ID" value="NM_001170561.1"/>
</dbReference>
<dbReference type="PDB" id="1V5U">
    <property type="method" value="NMR"/>
    <property type="chains" value="A=1762-1865"/>
</dbReference>
<dbReference type="PDBsum" id="1V5U"/>
<dbReference type="SMR" id="Q6ZPE2"/>
<dbReference type="BioGRID" id="219065">
    <property type="interactions" value="14"/>
</dbReference>
<dbReference type="FunCoup" id="Q6ZPE2">
    <property type="interactions" value="3173"/>
</dbReference>
<dbReference type="IntAct" id="Q6ZPE2">
    <property type="interactions" value="5"/>
</dbReference>
<dbReference type="MINT" id="Q6ZPE2"/>
<dbReference type="STRING" id="10090.ENSMUSP00000118107"/>
<dbReference type="GlyGen" id="Q6ZPE2">
    <property type="glycosylation" value="2 sites, 1 O-linked glycan (1 site)"/>
</dbReference>
<dbReference type="iPTMnet" id="Q6ZPE2"/>
<dbReference type="PhosphoSitePlus" id="Q6ZPE2"/>
<dbReference type="SwissPalm" id="Q6ZPE2"/>
<dbReference type="jPOST" id="Q6ZPE2"/>
<dbReference type="PaxDb" id="10090-ENSMUSP00000118107"/>
<dbReference type="PeptideAtlas" id="Q6ZPE2"/>
<dbReference type="ProteomicsDB" id="287636">
    <molecule id="Q6ZPE2-1"/>
</dbReference>
<dbReference type="ProteomicsDB" id="287637">
    <molecule id="Q6ZPE2-2"/>
</dbReference>
<dbReference type="Pumba" id="Q6ZPE2"/>
<dbReference type="Antibodypedia" id="28572">
    <property type="antibodies" value="80 antibodies from 15 providers"/>
</dbReference>
<dbReference type="DNASU" id="77980"/>
<dbReference type="Ensembl" id="ENSMUST00000123791.8">
    <molecule id="Q6ZPE2-1"/>
    <property type="protein sequence ID" value="ENSMUSP00000120725.2"/>
    <property type="gene ID" value="ENSMUSG00000036529.18"/>
</dbReference>
<dbReference type="Ensembl" id="ENSMUST00000144585.9">
    <molecule id="Q6ZPE2-2"/>
    <property type="protein sequence ID" value="ENSMUSP00000118107.3"/>
    <property type="gene ID" value="ENSMUSG00000036529.18"/>
</dbReference>
<dbReference type="GeneID" id="77980"/>
<dbReference type="KEGG" id="mmu:77980"/>
<dbReference type="UCSC" id="uc007xfz.1">
    <molecule id="Q6ZPE2-1"/>
    <property type="organism name" value="mouse"/>
</dbReference>
<dbReference type="UCSC" id="uc011zxu.1">
    <molecule id="Q6ZPE2-2"/>
    <property type="organism name" value="mouse"/>
</dbReference>
<dbReference type="AGR" id="MGI:1925230"/>
<dbReference type="CTD" id="6305"/>
<dbReference type="MGI" id="MGI:1925230">
    <property type="gene designation" value="Sbf1"/>
</dbReference>
<dbReference type="VEuPathDB" id="HostDB:ENSMUSG00000036529"/>
<dbReference type="eggNOG" id="KOG1090">
    <property type="taxonomic scope" value="Eukaryota"/>
</dbReference>
<dbReference type="eggNOG" id="KOG2080">
    <property type="taxonomic scope" value="Eukaryota"/>
</dbReference>
<dbReference type="GeneTree" id="ENSGT00940000155263"/>
<dbReference type="HOGENOM" id="CLU_002298_1_1_1"/>
<dbReference type="InParanoid" id="Q6ZPE2"/>
<dbReference type="OMA" id="NCINCIF"/>
<dbReference type="TreeFam" id="TF318583"/>
<dbReference type="Reactome" id="R-MMU-1483248">
    <property type="pathway name" value="Synthesis of PIPs at the ER membrane"/>
</dbReference>
<dbReference type="Reactome" id="R-MMU-8876198">
    <property type="pathway name" value="RAB GEFs exchange GTP for GDP on RABs"/>
</dbReference>
<dbReference type="BioGRID-ORCS" id="77980">
    <property type="hits" value="12 hits in 79 CRISPR screens"/>
</dbReference>
<dbReference type="CD-CODE" id="CE726F99">
    <property type="entry name" value="Postsynaptic density"/>
</dbReference>
<dbReference type="ChiTaRS" id="Sbf1">
    <property type="organism name" value="mouse"/>
</dbReference>
<dbReference type="EvolutionaryTrace" id="Q6ZPE2"/>
<dbReference type="PRO" id="PR:Q6ZPE2"/>
<dbReference type="Proteomes" id="UP000000589">
    <property type="component" value="Chromosome 15"/>
</dbReference>
<dbReference type="RNAct" id="Q6ZPE2">
    <property type="molecule type" value="protein"/>
</dbReference>
<dbReference type="Bgee" id="ENSMUSG00000036529">
    <property type="expression patterns" value="Expressed in dentate gyrus of hippocampal formation granule cell and 232 other cell types or tissues"/>
</dbReference>
<dbReference type="ExpressionAtlas" id="Q6ZPE2">
    <property type="expression patterns" value="baseline and differential"/>
</dbReference>
<dbReference type="GO" id="GO:0043005">
    <property type="term" value="C:neuron projection"/>
    <property type="evidence" value="ECO:0007669"/>
    <property type="project" value="UniProtKB-SubCell"/>
</dbReference>
<dbReference type="GO" id="GO:0016604">
    <property type="term" value="C:nuclear body"/>
    <property type="evidence" value="ECO:0007669"/>
    <property type="project" value="Ensembl"/>
</dbReference>
<dbReference type="GO" id="GO:0048471">
    <property type="term" value="C:perinuclear region of cytoplasm"/>
    <property type="evidence" value="ECO:0007669"/>
    <property type="project" value="UniProtKB-SubCell"/>
</dbReference>
<dbReference type="GO" id="GO:0005085">
    <property type="term" value="F:guanyl-nucleotide exchange factor activity"/>
    <property type="evidence" value="ECO:0007669"/>
    <property type="project" value="UniProtKB-KW"/>
</dbReference>
<dbReference type="GO" id="GO:0001691">
    <property type="term" value="F:pseudophosphatase activity"/>
    <property type="evidence" value="ECO:0000304"/>
    <property type="project" value="MGI"/>
</dbReference>
<dbReference type="GO" id="GO:0001558">
    <property type="term" value="P:regulation of cell growth"/>
    <property type="evidence" value="ECO:0000304"/>
    <property type="project" value="MGI"/>
</dbReference>
<dbReference type="GO" id="GO:0007286">
    <property type="term" value="P:spermatid development"/>
    <property type="evidence" value="ECO:0007669"/>
    <property type="project" value="Ensembl"/>
</dbReference>
<dbReference type="GO" id="GO:0007283">
    <property type="term" value="P:spermatogenesis"/>
    <property type="evidence" value="ECO:0000315"/>
    <property type="project" value="MGI"/>
</dbReference>
<dbReference type="CDD" id="cd01235">
    <property type="entry name" value="PH_Sbf1_hMTMR5"/>
    <property type="match status" value="1"/>
</dbReference>
<dbReference type="FunFam" id="2.30.29.30:FF:000093">
    <property type="entry name" value="SET binding factor 2"/>
    <property type="match status" value="1"/>
</dbReference>
<dbReference type="FunFam" id="3.30.450.200:FF:000004">
    <property type="entry name" value="SET binding factor 2"/>
    <property type="match status" value="1"/>
</dbReference>
<dbReference type="FunFam" id="3.40.50.11500:FF:000006">
    <property type="entry name" value="SET binding factor 2"/>
    <property type="match status" value="1"/>
</dbReference>
<dbReference type="Gene3D" id="3.30.450.200">
    <property type="match status" value="1"/>
</dbReference>
<dbReference type="Gene3D" id="3.40.50.11500">
    <property type="match status" value="1"/>
</dbReference>
<dbReference type="Gene3D" id="2.30.29.30">
    <property type="entry name" value="Pleckstrin-homology domain (PH domain)/Phosphotyrosine-binding domain (PTB)"/>
    <property type="match status" value="1"/>
</dbReference>
<dbReference type="InterPro" id="IPR001194">
    <property type="entry name" value="cDENN_dom"/>
</dbReference>
<dbReference type="InterPro" id="IPR005112">
    <property type="entry name" value="dDENN_dom"/>
</dbReference>
<dbReference type="InterPro" id="IPR043153">
    <property type="entry name" value="DENN_C"/>
</dbReference>
<dbReference type="InterPro" id="IPR004182">
    <property type="entry name" value="GRAM"/>
</dbReference>
<dbReference type="InterPro" id="IPR030564">
    <property type="entry name" value="Myotubularin"/>
</dbReference>
<dbReference type="InterPro" id="IPR010569">
    <property type="entry name" value="Myotubularin-like_Pase_dom"/>
</dbReference>
<dbReference type="InterPro" id="IPR011993">
    <property type="entry name" value="PH-like_dom_sf"/>
</dbReference>
<dbReference type="InterPro" id="IPR001849">
    <property type="entry name" value="PH_domain"/>
</dbReference>
<dbReference type="InterPro" id="IPR029021">
    <property type="entry name" value="Prot-tyrosine_phosphatase-like"/>
</dbReference>
<dbReference type="InterPro" id="IPR022096">
    <property type="entry name" value="SBF1/SBF2"/>
</dbReference>
<dbReference type="InterPro" id="IPR037516">
    <property type="entry name" value="Tripartite_DENN"/>
</dbReference>
<dbReference type="InterPro" id="IPR005113">
    <property type="entry name" value="uDENN_dom"/>
</dbReference>
<dbReference type="PANTHER" id="PTHR10807">
    <property type="entry name" value="MYOTUBULARIN-RELATED"/>
    <property type="match status" value="1"/>
</dbReference>
<dbReference type="PANTHER" id="PTHR10807:SF43">
    <property type="entry name" value="MYOTUBULARIN-RELATED PROTEIN 5"/>
    <property type="match status" value="1"/>
</dbReference>
<dbReference type="Pfam" id="PF02141">
    <property type="entry name" value="DENN"/>
    <property type="match status" value="1"/>
</dbReference>
<dbReference type="Pfam" id="PF02893">
    <property type="entry name" value="GRAM"/>
    <property type="match status" value="1"/>
</dbReference>
<dbReference type="Pfam" id="PF06602">
    <property type="entry name" value="Myotub-related"/>
    <property type="match status" value="1"/>
</dbReference>
<dbReference type="Pfam" id="PF00169">
    <property type="entry name" value="PH"/>
    <property type="match status" value="1"/>
</dbReference>
<dbReference type="Pfam" id="PF12335">
    <property type="entry name" value="SBF2"/>
    <property type="match status" value="1"/>
</dbReference>
<dbReference type="Pfam" id="PF03456">
    <property type="entry name" value="uDENN"/>
    <property type="match status" value="1"/>
</dbReference>
<dbReference type="SMART" id="SM00801">
    <property type="entry name" value="dDENN"/>
    <property type="match status" value="1"/>
</dbReference>
<dbReference type="SMART" id="SM00799">
    <property type="entry name" value="DENN"/>
    <property type="match status" value="1"/>
</dbReference>
<dbReference type="SMART" id="SM00568">
    <property type="entry name" value="GRAM"/>
    <property type="match status" value="1"/>
</dbReference>
<dbReference type="SMART" id="SM00233">
    <property type="entry name" value="PH"/>
    <property type="match status" value="1"/>
</dbReference>
<dbReference type="SMART" id="SM00800">
    <property type="entry name" value="uDENN"/>
    <property type="match status" value="1"/>
</dbReference>
<dbReference type="SUPFAM" id="SSF52799">
    <property type="entry name" value="(Phosphotyrosine protein) phosphatases II"/>
    <property type="match status" value="1"/>
</dbReference>
<dbReference type="SUPFAM" id="SSF50729">
    <property type="entry name" value="PH domain-like"/>
    <property type="match status" value="2"/>
</dbReference>
<dbReference type="PROSITE" id="PS50211">
    <property type="entry name" value="DENN"/>
    <property type="match status" value="1"/>
</dbReference>
<dbReference type="PROSITE" id="PS50003">
    <property type="entry name" value="PH_DOMAIN"/>
    <property type="match status" value="1"/>
</dbReference>
<dbReference type="PROSITE" id="PS51339">
    <property type="entry name" value="PPASE_MYOTUBULARIN"/>
    <property type="match status" value="1"/>
</dbReference>
<evidence type="ECO:0000250" key="1">
    <source>
        <dbReference type="UniProtKB" id="O95248"/>
    </source>
</evidence>
<evidence type="ECO:0000255" key="2"/>
<evidence type="ECO:0000255" key="3">
    <source>
        <dbReference type="PROSITE-ProRule" id="PRU00145"/>
    </source>
</evidence>
<evidence type="ECO:0000255" key="4">
    <source>
        <dbReference type="PROSITE-ProRule" id="PRU00304"/>
    </source>
</evidence>
<evidence type="ECO:0000255" key="5">
    <source>
        <dbReference type="PROSITE-ProRule" id="PRU00669"/>
    </source>
</evidence>
<evidence type="ECO:0000256" key="6">
    <source>
        <dbReference type="SAM" id="MobiDB-lite"/>
    </source>
</evidence>
<evidence type="ECO:0000269" key="7">
    <source>
    </source>
</evidence>
<evidence type="ECO:0000303" key="8">
    <source>
    </source>
</evidence>
<evidence type="ECO:0000305" key="9"/>
<evidence type="ECO:0007829" key="10">
    <source>
        <dbReference type="PDB" id="1V5U"/>
    </source>
</evidence>
<sequence length="1867" mass="208693">MARLADYFVLVAFGPHPRGSGEGQGQILQRFPEKDWEDNPFPQGIELFCQPSGWQLCPERNPPTFFVAVLTDINSERHYCACLTFWEPVESTQEVVCTDNATEKEEEADGGGQARLSSTAPAQPGQLFAPKTLVLVSRLDHAEVFRNSLGLIYAIHVEGLNVSLENVIGNLLTCTVPLAGGSQRTISLGAGDRQVIQTPLVDSLPVSRCSVALLFRQLGITNVLSLFCAALTEHKVLFLSRSYQRLADACRGLLALLFPLRYSFTYVPILPAQLLEVLSTPTPFIIGVNAAFQAETQELLDVIVADLDGGTVTVPECVHIPPLPEPLQSQTHNVLSMVLDPELELADLAFPPPTTSASSLKMQDKELRAVFLRLFAQLLQGYRWCLHIVRIHPEPVIRFHKAAFLGQRGLVEDDFLMKVLEGMAFAGFVSERGVPYRATDLFDELVAHEVARMRADESHPHRVLRHVQELAEQLYKNENPYPAVAMHKVQRPGEASHLRRTHRPFPRLDEGTIQWIVDQAAAKMQGAPPAVKAERRSTVPSGPPMTAILERCSGPHINSARRLEVVRNCISYVFEGKMLEAKKLLPAVLRALKGRAARRCLAHELHLHVQQNRAVLDHQQFDFVVRMMNCCLQDCTSLDEHGIASALLPLVTAFCRKLSPGVTQFAYSCVQEHVVWSTPQFWEAMFYGDVQTHIRALYLEPSDGVSPTQETGEAQSQDDERSALDVASEQRRLWPTLSREKQQELVQKEESTVFSQAIHYANRMSYLLLPLDSSKSRLLRERAGLGDLESASNSLVTNSMAGSVAESYDTESGFEDAETCDVAGAVVRFINRFVDKVCTESGVTSDHLKGLHVMVPDIVQMHIETLEAVHRESKRLPPIQKPKLLRPRLLPGEECVLDGLRVYLLPDGREEGVGGSGGGPALLPAEGAVFLTTYRVIFTGMPTDPLVGEQVVVRSFPVAALTKEKRISVQTPVDQLLQDGLQLRSCTFQLLKMAFDEEVGSDSAELFRKQLHKLRYPPDIRATFAFTLGSAHTPGRPPRVTKDKGPSFRTLSRNLMKNAKKTIGRQYVTRKKYNPPGWEHRGQPPPEDQEDEISVSEELEPSTLTPSSALKPSDRMTMSSLVERACCRDYQRLGLGTLSSSLSRAKSEPFRISPVNRMYAICRSYPGLLIVPQSIQDNALQRVSRCYRQNRFPVVCWRSGRSKAVLLRSGGLHGKGVVGLFKAQNTPSPGQAQADSSSLEQEKYLQAVVSSMPRYADSSGRNTLSSFSSAHMGGHGKWSSVRASGRSSGLGSDVGSRLAGRDLLSTPHTNGAPPDSGFLRPQRAALYIIGDKAQLKGVRPDPLQQWELVPIEVFEARQVKASFKKLLKACVPGCPATEPSPASFLRSLEDSEWLIQIHKLLQISVLVVELLDSGSSVLVSLEDGWDITTQVVSLVQLLSDPFYRTLEGFRLLVEKEWLSFGHRFSHRGAHTLAGQSSGFTPVFLQFLDCVHQVHLQFPMEFEFSQFYLKFLGYHHTSRRFRTFLLDSDYERIELGLLYEEKGERRGQLACKSVWEYVDRLSKRTPMFYNYTYAPEDTEVLRPYSNVSNLKVWDFYTEETLAEGPPYDWELAQGPPEPPEEERPDGGAPQSRRRVVWPCYDSRPRVQPDAISRLLEELQRLETELGRPSERWKDTWDRVKAAQRLESRQDGRGTPSSLLVSAVPHHRRSLGVYLQEGPVGSTLSLSLDSDQSSGSTTSSSRQAARRSTSTLYSQFQTAESENRSYEGILYKKGAFMKPWKARWFVLDKTKHQLRYYDHRMDTECKGVIDLAEVEAVAPGTPTIGAPKTVDEKAFFDVKTTRRVYNFCAQDVPSAQQWVDRIQSCLSDA</sequence>